<dbReference type="EMBL" id="AE015927">
    <property type="protein sequence ID" value="AAO36535.1"/>
    <property type="molecule type" value="Genomic_DNA"/>
</dbReference>
<dbReference type="SMR" id="Q892Q9"/>
<dbReference type="STRING" id="212717.CTC_02032"/>
<dbReference type="KEGG" id="ctc:CTC_02032"/>
<dbReference type="HOGENOM" id="CLU_057217_5_0_9"/>
<dbReference type="Proteomes" id="UP000001412">
    <property type="component" value="Chromosome"/>
</dbReference>
<dbReference type="GO" id="GO:0005737">
    <property type="term" value="C:cytoplasm"/>
    <property type="evidence" value="ECO:0007669"/>
    <property type="project" value="UniProtKB-SubCell"/>
</dbReference>
<dbReference type="GO" id="GO:0000774">
    <property type="term" value="F:adenyl-nucleotide exchange factor activity"/>
    <property type="evidence" value="ECO:0007669"/>
    <property type="project" value="InterPro"/>
</dbReference>
<dbReference type="GO" id="GO:0042803">
    <property type="term" value="F:protein homodimerization activity"/>
    <property type="evidence" value="ECO:0007669"/>
    <property type="project" value="InterPro"/>
</dbReference>
<dbReference type="GO" id="GO:0051087">
    <property type="term" value="F:protein-folding chaperone binding"/>
    <property type="evidence" value="ECO:0007669"/>
    <property type="project" value="InterPro"/>
</dbReference>
<dbReference type="GO" id="GO:0051082">
    <property type="term" value="F:unfolded protein binding"/>
    <property type="evidence" value="ECO:0007669"/>
    <property type="project" value="TreeGrafter"/>
</dbReference>
<dbReference type="GO" id="GO:0006457">
    <property type="term" value="P:protein folding"/>
    <property type="evidence" value="ECO:0007669"/>
    <property type="project" value="InterPro"/>
</dbReference>
<dbReference type="CDD" id="cd00446">
    <property type="entry name" value="GrpE"/>
    <property type="match status" value="1"/>
</dbReference>
<dbReference type="FunFam" id="2.30.22.10:FF:000001">
    <property type="entry name" value="Protein GrpE"/>
    <property type="match status" value="1"/>
</dbReference>
<dbReference type="Gene3D" id="3.90.20.20">
    <property type="match status" value="1"/>
</dbReference>
<dbReference type="Gene3D" id="2.30.22.10">
    <property type="entry name" value="Head domain of nucleotide exchange factor GrpE"/>
    <property type="match status" value="1"/>
</dbReference>
<dbReference type="HAMAP" id="MF_01151">
    <property type="entry name" value="GrpE"/>
    <property type="match status" value="1"/>
</dbReference>
<dbReference type="InterPro" id="IPR000740">
    <property type="entry name" value="GrpE"/>
</dbReference>
<dbReference type="InterPro" id="IPR013805">
    <property type="entry name" value="GrpE_coiled_coil"/>
</dbReference>
<dbReference type="InterPro" id="IPR009012">
    <property type="entry name" value="GrpE_head"/>
</dbReference>
<dbReference type="NCBIfam" id="NF010738">
    <property type="entry name" value="PRK14140.1"/>
    <property type="match status" value="1"/>
</dbReference>
<dbReference type="NCBIfam" id="NF010757">
    <property type="entry name" value="PRK14160.1"/>
    <property type="match status" value="1"/>
</dbReference>
<dbReference type="PANTHER" id="PTHR21237">
    <property type="entry name" value="GRPE PROTEIN"/>
    <property type="match status" value="1"/>
</dbReference>
<dbReference type="PANTHER" id="PTHR21237:SF23">
    <property type="entry name" value="GRPE PROTEIN HOMOLOG, MITOCHONDRIAL"/>
    <property type="match status" value="1"/>
</dbReference>
<dbReference type="Pfam" id="PF01025">
    <property type="entry name" value="GrpE"/>
    <property type="match status" value="1"/>
</dbReference>
<dbReference type="PRINTS" id="PR00773">
    <property type="entry name" value="GRPEPROTEIN"/>
</dbReference>
<dbReference type="SUPFAM" id="SSF58014">
    <property type="entry name" value="Coiled-coil domain of nucleotide exchange factor GrpE"/>
    <property type="match status" value="1"/>
</dbReference>
<dbReference type="SUPFAM" id="SSF51064">
    <property type="entry name" value="Head domain of nucleotide exchange factor GrpE"/>
    <property type="match status" value="1"/>
</dbReference>
<dbReference type="PROSITE" id="PS01071">
    <property type="entry name" value="GRPE"/>
    <property type="match status" value="1"/>
</dbReference>
<accession>Q892Q9</accession>
<proteinExistence type="inferred from homology"/>
<name>GRPE_CLOTE</name>
<comment type="function">
    <text evidence="1">Participates actively in the response to hyperosmotic and heat shock by preventing the aggregation of stress-denatured proteins, in association with DnaK and GrpE. It is the nucleotide exchange factor for DnaK and may function as a thermosensor. Unfolded proteins bind initially to DnaJ; upon interaction with the DnaJ-bound protein, DnaK hydrolyzes its bound ATP, resulting in the formation of a stable complex. GrpE releases ADP from DnaK; ATP binding to DnaK triggers the release of the substrate protein, thus completing the reaction cycle. Several rounds of ATP-dependent interactions between DnaJ, DnaK and GrpE are required for fully efficient folding.</text>
</comment>
<comment type="subunit">
    <text evidence="1">Homodimer.</text>
</comment>
<comment type="subcellular location">
    <subcellularLocation>
        <location evidence="1">Cytoplasm</location>
    </subcellularLocation>
</comment>
<comment type="similarity">
    <text evidence="1">Belongs to the GrpE family.</text>
</comment>
<feature type="chain" id="PRO_0000113775" description="Protein GrpE">
    <location>
        <begin position="1"/>
        <end position="200"/>
    </location>
</feature>
<feature type="region of interest" description="Disordered" evidence="2">
    <location>
        <begin position="15"/>
        <end position="47"/>
    </location>
</feature>
<feature type="compositionally biased region" description="Acidic residues" evidence="2">
    <location>
        <begin position="16"/>
        <end position="47"/>
    </location>
</feature>
<organism>
    <name type="scientific">Clostridium tetani (strain Massachusetts / E88)</name>
    <dbReference type="NCBI Taxonomy" id="212717"/>
    <lineage>
        <taxon>Bacteria</taxon>
        <taxon>Bacillati</taxon>
        <taxon>Bacillota</taxon>
        <taxon>Clostridia</taxon>
        <taxon>Eubacteriales</taxon>
        <taxon>Clostridiaceae</taxon>
        <taxon>Clostridium</taxon>
    </lineage>
</organism>
<sequence>MKWRHDYMAEKKVEDLEMDLNEEELEESEVNEDKEFEELDKSEEENEVEELISTLKDENEKLNNEMEALKDRLLRTTGEYDNYRKRTDREKEGLYASACEDVLKEILPVLDNLERAILAKGDIEDLKKGVDMTLKQFKDSFKNLGVEEISTENGFDPNLHDAVMHVEDSQYGEKEVVEVFLKGYKKGDKIIRHSMVKVAN</sequence>
<evidence type="ECO:0000255" key="1">
    <source>
        <dbReference type="HAMAP-Rule" id="MF_01151"/>
    </source>
</evidence>
<evidence type="ECO:0000256" key="2">
    <source>
        <dbReference type="SAM" id="MobiDB-lite"/>
    </source>
</evidence>
<protein>
    <recommendedName>
        <fullName evidence="1">Protein GrpE</fullName>
    </recommendedName>
    <alternativeName>
        <fullName evidence="1">HSP-70 cofactor</fullName>
    </alternativeName>
</protein>
<keyword id="KW-0143">Chaperone</keyword>
<keyword id="KW-0963">Cytoplasm</keyword>
<keyword id="KW-1185">Reference proteome</keyword>
<keyword id="KW-0346">Stress response</keyword>
<gene>
    <name evidence="1" type="primary">grpE</name>
    <name type="ordered locus">CTC_02032</name>
</gene>
<reference key="1">
    <citation type="journal article" date="2003" name="Proc. Natl. Acad. Sci. U.S.A.">
        <title>The genome sequence of Clostridium tetani, the causative agent of tetanus disease.</title>
        <authorList>
            <person name="Brueggemann H."/>
            <person name="Baeumer S."/>
            <person name="Fricke W.F."/>
            <person name="Wiezer A."/>
            <person name="Liesegang H."/>
            <person name="Decker I."/>
            <person name="Herzberg C."/>
            <person name="Martinez-Arias R."/>
            <person name="Merkl R."/>
            <person name="Henne A."/>
            <person name="Gottschalk G."/>
        </authorList>
    </citation>
    <scope>NUCLEOTIDE SEQUENCE [LARGE SCALE GENOMIC DNA]</scope>
    <source>
        <strain>Massachusetts / E88</strain>
    </source>
</reference>